<gene>
    <name evidence="1" type="primary">rpsK</name>
    <name type="ordered locus">MCA2349</name>
</gene>
<keyword id="KW-1185">Reference proteome</keyword>
<keyword id="KW-0687">Ribonucleoprotein</keyword>
<keyword id="KW-0689">Ribosomal protein</keyword>
<keyword id="KW-0694">RNA-binding</keyword>
<keyword id="KW-0699">rRNA-binding</keyword>
<dbReference type="EMBL" id="AE017282">
    <property type="protein sequence ID" value="AAU91491.1"/>
    <property type="molecule type" value="Genomic_DNA"/>
</dbReference>
<dbReference type="RefSeq" id="WP_010961577.1">
    <property type="nucleotide sequence ID" value="NC_002977.6"/>
</dbReference>
<dbReference type="SMR" id="Q605D5"/>
<dbReference type="STRING" id="243233.MCA2349"/>
<dbReference type="GeneID" id="88224553"/>
<dbReference type="KEGG" id="mca:MCA2349"/>
<dbReference type="eggNOG" id="COG0100">
    <property type="taxonomic scope" value="Bacteria"/>
</dbReference>
<dbReference type="HOGENOM" id="CLU_072439_5_0_6"/>
<dbReference type="Proteomes" id="UP000006821">
    <property type="component" value="Chromosome"/>
</dbReference>
<dbReference type="GO" id="GO:1990904">
    <property type="term" value="C:ribonucleoprotein complex"/>
    <property type="evidence" value="ECO:0007669"/>
    <property type="project" value="UniProtKB-KW"/>
</dbReference>
<dbReference type="GO" id="GO:0005840">
    <property type="term" value="C:ribosome"/>
    <property type="evidence" value="ECO:0007669"/>
    <property type="project" value="UniProtKB-KW"/>
</dbReference>
<dbReference type="GO" id="GO:0019843">
    <property type="term" value="F:rRNA binding"/>
    <property type="evidence" value="ECO:0007669"/>
    <property type="project" value="UniProtKB-UniRule"/>
</dbReference>
<dbReference type="GO" id="GO:0003735">
    <property type="term" value="F:structural constituent of ribosome"/>
    <property type="evidence" value="ECO:0007669"/>
    <property type="project" value="InterPro"/>
</dbReference>
<dbReference type="GO" id="GO:0006412">
    <property type="term" value="P:translation"/>
    <property type="evidence" value="ECO:0007669"/>
    <property type="project" value="UniProtKB-UniRule"/>
</dbReference>
<dbReference type="FunFam" id="3.30.420.80:FF:000001">
    <property type="entry name" value="30S ribosomal protein S11"/>
    <property type="match status" value="1"/>
</dbReference>
<dbReference type="Gene3D" id="3.30.420.80">
    <property type="entry name" value="Ribosomal protein S11"/>
    <property type="match status" value="1"/>
</dbReference>
<dbReference type="HAMAP" id="MF_01310">
    <property type="entry name" value="Ribosomal_uS11"/>
    <property type="match status" value="1"/>
</dbReference>
<dbReference type="InterPro" id="IPR001971">
    <property type="entry name" value="Ribosomal_uS11"/>
</dbReference>
<dbReference type="InterPro" id="IPR019981">
    <property type="entry name" value="Ribosomal_uS11_bac-type"/>
</dbReference>
<dbReference type="InterPro" id="IPR018102">
    <property type="entry name" value="Ribosomal_uS11_CS"/>
</dbReference>
<dbReference type="InterPro" id="IPR036967">
    <property type="entry name" value="Ribosomal_uS11_sf"/>
</dbReference>
<dbReference type="NCBIfam" id="NF003698">
    <property type="entry name" value="PRK05309.1"/>
    <property type="match status" value="1"/>
</dbReference>
<dbReference type="NCBIfam" id="TIGR03632">
    <property type="entry name" value="uS11_bact"/>
    <property type="match status" value="1"/>
</dbReference>
<dbReference type="PANTHER" id="PTHR11759">
    <property type="entry name" value="40S RIBOSOMAL PROTEIN S14/30S RIBOSOMAL PROTEIN S11"/>
    <property type="match status" value="1"/>
</dbReference>
<dbReference type="Pfam" id="PF00411">
    <property type="entry name" value="Ribosomal_S11"/>
    <property type="match status" value="1"/>
</dbReference>
<dbReference type="PIRSF" id="PIRSF002131">
    <property type="entry name" value="Ribosomal_S11"/>
    <property type="match status" value="1"/>
</dbReference>
<dbReference type="SUPFAM" id="SSF53137">
    <property type="entry name" value="Translational machinery components"/>
    <property type="match status" value="1"/>
</dbReference>
<dbReference type="PROSITE" id="PS00054">
    <property type="entry name" value="RIBOSOMAL_S11"/>
    <property type="match status" value="1"/>
</dbReference>
<proteinExistence type="inferred from homology"/>
<evidence type="ECO:0000255" key="1">
    <source>
        <dbReference type="HAMAP-Rule" id="MF_01310"/>
    </source>
</evidence>
<evidence type="ECO:0000305" key="2"/>
<sequence>MATTGRPVKRVKRDISDGIAHISASFNNTIITITDRKGNALSWASAGASGFRGSRKSTPFAAQVAAEKAGAVAKEYGIKNLDVHVTGPGPGRESAVRSLNALGFKIVNVVDTTPLPHNGCRPPKKRRV</sequence>
<comment type="function">
    <text evidence="1">Located on the platform of the 30S subunit, it bridges several disparate RNA helices of the 16S rRNA. Forms part of the Shine-Dalgarno cleft in the 70S ribosome.</text>
</comment>
<comment type="subunit">
    <text evidence="1">Part of the 30S ribosomal subunit. Interacts with proteins S7 and S18. Binds to IF-3.</text>
</comment>
<comment type="similarity">
    <text evidence="1">Belongs to the universal ribosomal protein uS11 family.</text>
</comment>
<reference key="1">
    <citation type="journal article" date="2004" name="PLoS Biol.">
        <title>Genomic insights into methanotrophy: the complete genome sequence of Methylococcus capsulatus (Bath).</title>
        <authorList>
            <person name="Ward N.L."/>
            <person name="Larsen O."/>
            <person name="Sakwa J."/>
            <person name="Bruseth L."/>
            <person name="Khouri H.M."/>
            <person name="Durkin A.S."/>
            <person name="Dimitrov G."/>
            <person name="Jiang L."/>
            <person name="Scanlan D."/>
            <person name="Kang K.H."/>
            <person name="Lewis M.R."/>
            <person name="Nelson K.E."/>
            <person name="Methe B.A."/>
            <person name="Wu M."/>
            <person name="Heidelberg J.F."/>
            <person name="Paulsen I.T."/>
            <person name="Fouts D.E."/>
            <person name="Ravel J."/>
            <person name="Tettelin H."/>
            <person name="Ren Q."/>
            <person name="Read T.D."/>
            <person name="DeBoy R.T."/>
            <person name="Seshadri R."/>
            <person name="Salzberg S.L."/>
            <person name="Jensen H.B."/>
            <person name="Birkeland N.K."/>
            <person name="Nelson W.C."/>
            <person name="Dodson R.J."/>
            <person name="Grindhaug S.H."/>
            <person name="Holt I.E."/>
            <person name="Eidhammer I."/>
            <person name="Jonasen I."/>
            <person name="Vanaken S."/>
            <person name="Utterback T.R."/>
            <person name="Feldblyum T.V."/>
            <person name="Fraser C.M."/>
            <person name="Lillehaug J.R."/>
            <person name="Eisen J.A."/>
        </authorList>
    </citation>
    <scope>NUCLEOTIDE SEQUENCE [LARGE SCALE GENOMIC DNA]</scope>
    <source>
        <strain>ATCC 33009 / NCIMB 11132 / Bath</strain>
    </source>
</reference>
<protein>
    <recommendedName>
        <fullName evidence="1">Small ribosomal subunit protein uS11</fullName>
    </recommendedName>
    <alternativeName>
        <fullName evidence="2">30S ribosomal protein S11</fullName>
    </alternativeName>
</protein>
<name>RS11_METCA</name>
<feature type="chain" id="PRO_0000123174" description="Small ribosomal subunit protein uS11">
    <location>
        <begin position="1"/>
        <end position="128"/>
    </location>
</feature>
<accession>Q605D5</accession>
<organism>
    <name type="scientific">Methylococcus capsulatus (strain ATCC 33009 / NCIMB 11132 / Bath)</name>
    <dbReference type="NCBI Taxonomy" id="243233"/>
    <lineage>
        <taxon>Bacteria</taxon>
        <taxon>Pseudomonadati</taxon>
        <taxon>Pseudomonadota</taxon>
        <taxon>Gammaproteobacteria</taxon>
        <taxon>Methylococcales</taxon>
        <taxon>Methylococcaceae</taxon>
        <taxon>Methylococcus</taxon>
    </lineage>
</organism>